<name>CLPP_LARHH</name>
<sequence length="212" mass="23437">MQNVRDWQWSQPAPQALGLVPMVVEQSGRGERAYDIYSRLLKERIVFMVGPVTDETANLVVAQMLFLESENPDKDIHLYINSPGGSVTAGLSIYDTMNFIKPSVSTLCIGQAASMGAFLLSAGAKGKRFALPNSRVMIHQPLGGFQGQASDFEIHAREILTLKRKLNELMAAHCGRPLEDLERDTDRDNFMNAAQALEYGLIDQVLENRAAV</sequence>
<protein>
    <recommendedName>
        <fullName evidence="1">ATP-dependent Clp protease proteolytic subunit</fullName>
        <ecNumber evidence="1">3.4.21.92</ecNumber>
    </recommendedName>
    <alternativeName>
        <fullName evidence="1">Endopeptidase Clp</fullName>
    </alternativeName>
</protein>
<feature type="chain" id="PRO_1000135156" description="ATP-dependent Clp protease proteolytic subunit">
    <location>
        <begin position="1"/>
        <end position="212"/>
    </location>
</feature>
<feature type="active site" description="Nucleophile" evidence="1">
    <location>
        <position position="114"/>
    </location>
</feature>
<feature type="active site" evidence="1">
    <location>
        <position position="139"/>
    </location>
</feature>
<organism>
    <name type="scientific">Laribacter hongkongensis (strain HLHK9)</name>
    <dbReference type="NCBI Taxonomy" id="557598"/>
    <lineage>
        <taxon>Bacteria</taxon>
        <taxon>Pseudomonadati</taxon>
        <taxon>Pseudomonadota</taxon>
        <taxon>Betaproteobacteria</taxon>
        <taxon>Neisseriales</taxon>
        <taxon>Aquaspirillaceae</taxon>
        <taxon>Laribacter</taxon>
    </lineage>
</organism>
<reference key="1">
    <citation type="journal article" date="2009" name="PLoS Genet.">
        <title>The complete genome and proteome of Laribacter hongkongensis reveal potential mechanisms for adaptations to different temperatures and habitats.</title>
        <authorList>
            <person name="Woo P.C.Y."/>
            <person name="Lau S.K.P."/>
            <person name="Tse H."/>
            <person name="Teng J.L.L."/>
            <person name="Curreem S.O."/>
            <person name="Tsang A.K.L."/>
            <person name="Fan R.Y.Y."/>
            <person name="Wong G.K.M."/>
            <person name="Huang Y."/>
            <person name="Loman N.J."/>
            <person name="Snyder L.A.S."/>
            <person name="Cai J.J."/>
            <person name="Huang J.-D."/>
            <person name="Mak W."/>
            <person name="Pallen M.J."/>
            <person name="Lok S."/>
            <person name="Yuen K.-Y."/>
        </authorList>
    </citation>
    <scope>NUCLEOTIDE SEQUENCE [LARGE SCALE GENOMIC DNA]</scope>
    <source>
        <strain>HLHK9</strain>
    </source>
</reference>
<keyword id="KW-0963">Cytoplasm</keyword>
<keyword id="KW-0378">Hydrolase</keyword>
<keyword id="KW-0645">Protease</keyword>
<keyword id="KW-1185">Reference proteome</keyword>
<keyword id="KW-0720">Serine protease</keyword>
<comment type="function">
    <text evidence="1">Cleaves peptides in various proteins in a process that requires ATP hydrolysis. Has a chymotrypsin-like activity. Plays a major role in the degradation of misfolded proteins.</text>
</comment>
<comment type="catalytic activity">
    <reaction evidence="1">
        <text>Hydrolysis of proteins to small peptides in the presence of ATP and magnesium. alpha-casein is the usual test substrate. In the absence of ATP, only oligopeptides shorter than five residues are hydrolyzed (such as succinyl-Leu-Tyr-|-NHMec, and Leu-Tyr-Leu-|-Tyr-Trp, in which cleavage of the -Tyr-|-Leu- and -Tyr-|-Trp bonds also occurs).</text>
        <dbReference type="EC" id="3.4.21.92"/>
    </reaction>
</comment>
<comment type="subunit">
    <text evidence="1">Fourteen ClpP subunits assemble into 2 heptameric rings which stack back to back to give a disk-like structure with a central cavity, resembling the structure of eukaryotic proteasomes.</text>
</comment>
<comment type="subcellular location">
    <subcellularLocation>
        <location evidence="1">Cytoplasm</location>
    </subcellularLocation>
</comment>
<comment type="similarity">
    <text evidence="1">Belongs to the peptidase S14 family.</text>
</comment>
<proteinExistence type="inferred from homology"/>
<accession>C1D539</accession>
<evidence type="ECO:0000255" key="1">
    <source>
        <dbReference type="HAMAP-Rule" id="MF_00444"/>
    </source>
</evidence>
<dbReference type="EC" id="3.4.21.92" evidence="1"/>
<dbReference type="EMBL" id="CP001154">
    <property type="protein sequence ID" value="ACO73856.1"/>
    <property type="molecule type" value="Genomic_DNA"/>
</dbReference>
<dbReference type="RefSeq" id="WP_012696348.1">
    <property type="nucleotide sequence ID" value="NC_012559.1"/>
</dbReference>
<dbReference type="SMR" id="C1D539"/>
<dbReference type="STRING" id="557598.LHK_00863"/>
<dbReference type="MEROPS" id="S14.001"/>
<dbReference type="GeneID" id="75110223"/>
<dbReference type="KEGG" id="lhk:LHK_00863"/>
<dbReference type="eggNOG" id="COG0740">
    <property type="taxonomic scope" value="Bacteria"/>
</dbReference>
<dbReference type="HOGENOM" id="CLU_058707_3_2_4"/>
<dbReference type="Proteomes" id="UP000002010">
    <property type="component" value="Chromosome"/>
</dbReference>
<dbReference type="GO" id="GO:0005737">
    <property type="term" value="C:cytoplasm"/>
    <property type="evidence" value="ECO:0007669"/>
    <property type="project" value="UniProtKB-SubCell"/>
</dbReference>
<dbReference type="GO" id="GO:0009368">
    <property type="term" value="C:endopeptidase Clp complex"/>
    <property type="evidence" value="ECO:0007669"/>
    <property type="project" value="TreeGrafter"/>
</dbReference>
<dbReference type="GO" id="GO:0004176">
    <property type="term" value="F:ATP-dependent peptidase activity"/>
    <property type="evidence" value="ECO:0007669"/>
    <property type="project" value="InterPro"/>
</dbReference>
<dbReference type="GO" id="GO:0051117">
    <property type="term" value="F:ATPase binding"/>
    <property type="evidence" value="ECO:0007669"/>
    <property type="project" value="TreeGrafter"/>
</dbReference>
<dbReference type="GO" id="GO:0004252">
    <property type="term" value="F:serine-type endopeptidase activity"/>
    <property type="evidence" value="ECO:0007669"/>
    <property type="project" value="UniProtKB-UniRule"/>
</dbReference>
<dbReference type="GO" id="GO:0006515">
    <property type="term" value="P:protein quality control for misfolded or incompletely synthesized proteins"/>
    <property type="evidence" value="ECO:0007669"/>
    <property type="project" value="TreeGrafter"/>
</dbReference>
<dbReference type="CDD" id="cd07017">
    <property type="entry name" value="S14_ClpP_2"/>
    <property type="match status" value="1"/>
</dbReference>
<dbReference type="FunFam" id="3.90.226.10:FF:000001">
    <property type="entry name" value="ATP-dependent Clp protease proteolytic subunit"/>
    <property type="match status" value="1"/>
</dbReference>
<dbReference type="Gene3D" id="3.90.226.10">
    <property type="entry name" value="2-enoyl-CoA Hydratase, Chain A, domain 1"/>
    <property type="match status" value="1"/>
</dbReference>
<dbReference type="HAMAP" id="MF_00444">
    <property type="entry name" value="ClpP"/>
    <property type="match status" value="1"/>
</dbReference>
<dbReference type="InterPro" id="IPR001907">
    <property type="entry name" value="ClpP"/>
</dbReference>
<dbReference type="InterPro" id="IPR029045">
    <property type="entry name" value="ClpP/crotonase-like_dom_sf"/>
</dbReference>
<dbReference type="InterPro" id="IPR023562">
    <property type="entry name" value="ClpP/TepA"/>
</dbReference>
<dbReference type="InterPro" id="IPR033135">
    <property type="entry name" value="ClpP_His_AS"/>
</dbReference>
<dbReference type="InterPro" id="IPR018215">
    <property type="entry name" value="ClpP_Ser_AS"/>
</dbReference>
<dbReference type="NCBIfam" id="TIGR00493">
    <property type="entry name" value="clpP"/>
    <property type="match status" value="1"/>
</dbReference>
<dbReference type="NCBIfam" id="NF001368">
    <property type="entry name" value="PRK00277.1"/>
    <property type="match status" value="1"/>
</dbReference>
<dbReference type="NCBIfam" id="NF009205">
    <property type="entry name" value="PRK12553.1"/>
    <property type="match status" value="1"/>
</dbReference>
<dbReference type="PANTHER" id="PTHR10381">
    <property type="entry name" value="ATP-DEPENDENT CLP PROTEASE PROTEOLYTIC SUBUNIT"/>
    <property type="match status" value="1"/>
</dbReference>
<dbReference type="PANTHER" id="PTHR10381:SF70">
    <property type="entry name" value="ATP-DEPENDENT CLP PROTEASE PROTEOLYTIC SUBUNIT"/>
    <property type="match status" value="1"/>
</dbReference>
<dbReference type="Pfam" id="PF00574">
    <property type="entry name" value="CLP_protease"/>
    <property type="match status" value="1"/>
</dbReference>
<dbReference type="PRINTS" id="PR00127">
    <property type="entry name" value="CLPPROTEASEP"/>
</dbReference>
<dbReference type="SUPFAM" id="SSF52096">
    <property type="entry name" value="ClpP/crotonase"/>
    <property type="match status" value="1"/>
</dbReference>
<dbReference type="PROSITE" id="PS00382">
    <property type="entry name" value="CLP_PROTEASE_HIS"/>
    <property type="match status" value="1"/>
</dbReference>
<dbReference type="PROSITE" id="PS00381">
    <property type="entry name" value="CLP_PROTEASE_SER"/>
    <property type="match status" value="1"/>
</dbReference>
<gene>
    <name evidence="1" type="primary">clpP</name>
    <name type="ordered locus">LHK_00863</name>
</gene>